<name>RS3A2_LEIIN</name>
<keyword id="KW-0963">Cytoplasm</keyword>
<keyword id="KW-1185">Reference proteome</keyword>
<keyword id="KW-0687">Ribonucleoprotein</keyword>
<keyword id="KW-0689">Ribosomal protein</keyword>
<feature type="initiator methionine" description="Removed" evidence="1">
    <location>
        <position position="1"/>
    </location>
</feature>
<feature type="chain" id="PRO_0000389346" description="Small ribosomal subunit protein eS1B">
    <location>
        <begin position="2"/>
        <end position="264"/>
    </location>
</feature>
<feature type="region of interest" description="Disordered" evidence="2">
    <location>
        <begin position="1"/>
        <end position="23"/>
    </location>
</feature>
<feature type="compositionally biased region" description="Basic residues" evidence="2">
    <location>
        <begin position="1"/>
        <end position="19"/>
    </location>
</feature>
<sequence length="264" mass="30008">MALGKNKRISKGGKRGKRGKAQETMARKEWYDVVAPANFEKRQFAKTICNKTQGTRIAADVLRGRVFEANLADLNQSAGEEEAYRKVRFTVQEVQGRNLLTQFHSMEVTTDKMASLLRKWCTTMETTVEVKTADGYTMRLFVVAFTKPQANQQSRNCYAKQRLVKWLRMRITKMIKRRLSKVQIKEAVSLLTRNVLSDALVRRCNPILPLRELRIRKVRVVRTPKFDAQALLSAHGTIPASVEADQREVEEAVEAAPAAEKAAE</sequence>
<reference key="1">
    <citation type="journal article" date="2007" name="Nat. Genet.">
        <title>Comparative genomic analysis of three Leishmania species that cause diverse human disease.</title>
        <authorList>
            <person name="Peacock C.S."/>
            <person name="Seeger K."/>
            <person name="Harris D."/>
            <person name="Murphy L."/>
            <person name="Ruiz J.C."/>
            <person name="Quail M.A."/>
            <person name="Peters N."/>
            <person name="Adlem E."/>
            <person name="Tivey A."/>
            <person name="Aslett M."/>
            <person name="Kerhornou A."/>
            <person name="Ivens A."/>
            <person name="Fraser A."/>
            <person name="Rajandream M.-A."/>
            <person name="Carver T."/>
            <person name="Norbertczak H."/>
            <person name="Chillingworth T."/>
            <person name="Hance Z."/>
            <person name="Jagels K."/>
            <person name="Moule S."/>
            <person name="Ormond D."/>
            <person name="Rutter S."/>
            <person name="Sqaures R."/>
            <person name="Whitehead S."/>
            <person name="Rabbinowitsch E."/>
            <person name="Arrowsmith C."/>
            <person name="White B."/>
            <person name="Thurston S."/>
            <person name="Bringaud F."/>
            <person name="Baldauf S.L."/>
            <person name="Faulconbridge A."/>
            <person name="Jeffares D."/>
            <person name="Depledge D.P."/>
            <person name="Oyola S.O."/>
            <person name="Hilley J.D."/>
            <person name="Brito L.O."/>
            <person name="Tosi L.R.O."/>
            <person name="Barrell B."/>
            <person name="Cruz A.K."/>
            <person name="Mottram J.C."/>
            <person name="Smith D.F."/>
            <person name="Berriman M."/>
        </authorList>
    </citation>
    <scope>NUCLEOTIDE SEQUENCE [LARGE SCALE GENOMIC DNA]</scope>
    <source>
        <strain>JPCM5</strain>
    </source>
</reference>
<accession>A4IAU1</accession>
<comment type="subunit">
    <text evidence="1">Component of the small ribosomal subunit. Mature ribosomes consist of a small (40S) and a large (60S) subunit. The 40S subunit contains about 33 different proteins and 1 molecule of RNA (18S). The 60S subunit contains about 49 different proteins and 3 molecules of RNA (25S, 5.8S and 5S).</text>
</comment>
<comment type="subcellular location">
    <subcellularLocation>
        <location evidence="1">Cytoplasm</location>
    </subcellularLocation>
</comment>
<comment type="similarity">
    <text evidence="1">Belongs to the eukaryotic ribosomal protein eS1 family.</text>
</comment>
<dbReference type="EMBL" id="FR796467">
    <property type="protein sequence ID" value="CAM71950.1"/>
    <property type="molecule type" value="Genomic_DNA"/>
</dbReference>
<dbReference type="RefSeq" id="XP_001468860.1">
    <property type="nucleotide sequence ID" value="XM_001468823.1"/>
</dbReference>
<dbReference type="SMR" id="A4IAU1"/>
<dbReference type="FunCoup" id="A4IAU1">
    <property type="interactions" value="401"/>
</dbReference>
<dbReference type="STRING" id="5671.A4IAU1"/>
<dbReference type="GeneID" id="5072942"/>
<dbReference type="KEGG" id="lif:LINJ_35_0410"/>
<dbReference type="VEuPathDB" id="TriTrypDB:LINF_350009200"/>
<dbReference type="eggNOG" id="KOG1628">
    <property type="taxonomic scope" value="Eukaryota"/>
</dbReference>
<dbReference type="InParanoid" id="A4IAU1"/>
<dbReference type="OMA" id="TRFKGHE"/>
<dbReference type="Proteomes" id="UP000008153">
    <property type="component" value="Chromosome 35"/>
</dbReference>
<dbReference type="GO" id="GO:0022627">
    <property type="term" value="C:cytosolic small ribosomal subunit"/>
    <property type="evidence" value="ECO:0007669"/>
    <property type="project" value="UniProtKB-UniRule"/>
</dbReference>
<dbReference type="GO" id="GO:0003735">
    <property type="term" value="F:structural constituent of ribosome"/>
    <property type="evidence" value="ECO:0007669"/>
    <property type="project" value="UniProtKB-UniRule"/>
</dbReference>
<dbReference type="GO" id="GO:0006412">
    <property type="term" value="P:translation"/>
    <property type="evidence" value="ECO:0007669"/>
    <property type="project" value="UniProtKB-UniRule"/>
</dbReference>
<dbReference type="HAMAP" id="MF_03122">
    <property type="entry name" value="Ribosomal_eS1_euk"/>
    <property type="match status" value="1"/>
</dbReference>
<dbReference type="InterPro" id="IPR001593">
    <property type="entry name" value="Ribosomal_eS1"/>
</dbReference>
<dbReference type="InterPro" id="IPR027500">
    <property type="entry name" value="Ribosomal_eS1_euk"/>
</dbReference>
<dbReference type="PANTHER" id="PTHR11830">
    <property type="entry name" value="40S RIBOSOMAL PROTEIN S3A"/>
    <property type="match status" value="1"/>
</dbReference>
<dbReference type="Pfam" id="PF01015">
    <property type="entry name" value="Ribosomal_S3Ae"/>
    <property type="match status" value="1"/>
</dbReference>
<dbReference type="SMART" id="SM01397">
    <property type="entry name" value="Ribosomal_S3Ae"/>
    <property type="match status" value="1"/>
</dbReference>
<proteinExistence type="inferred from homology"/>
<gene>
    <name type="ORF">LinJ35.0510</name>
    <name type="ORF">LinJ_35_0410</name>
</gene>
<organism>
    <name type="scientific">Leishmania infantum</name>
    <dbReference type="NCBI Taxonomy" id="5671"/>
    <lineage>
        <taxon>Eukaryota</taxon>
        <taxon>Discoba</taxon>
        <taxon>Euglenozoa</taxon>
        <taxon>Kinetoplastea</taxon>
        <taxon>Metakinetoplastina</taxon>
        <taxon>Trypanosomatida</taxon>
        <taxon>Trypanosomatidae</taxon>
        <taxon>Leishmaniinae</taxon>
        <taxon>Leishmania</taxon>
    </lineage>
</organism>
<evidence type="ECO:0000255" key="1">
    <source>
        <dbReference type="HAMAP-Rule" id="MF_03122"/>
    </source>
</evidence>
<evidence type="ECO:0000256" key="2">
    <source>
        <dbReference type="SAM" id="MobiDB-lite"/>
    </source>
</evidence>
<evidence type="ECO:0000305" key="3"/>
<protein>
    <recommendedName>
        <fullName evidence="1">Small ribosomal subunit protein eS1B</fullName>
    </recommendedName>
    <alternativeName>
        <fullName evidence="3">40S ribosomal protein S3a-2</fullName>
    </alternativeName>
</protein>